<sequence length="105" mass="11426">MRGMGNMQGMMKQMQKMQKEMAKAQADLEAQEFTGTAGGGMVTVKATGKRVITDVVINEEVVDPEDIEMLQDLVLAATNDVLKQIEDTTSQTMGKFTQGLNIPGM</sequence>
<reference key="1">
    <citation type="journal article" date="2004" name="Nucleic Acids Res.">
        <title>Whole genome comparisons of serotype 4b and 1/2a strains of the food-borne pathogen Listeria monocytogenes reveal new insights into the core genome components of this species.</title>
        <authorList>
            <person name="Nelson K.E."/>
            <person name="Fouts D.E."/>
            <person name="Mongodin E.F."/>
            <person name="Ravel J."/>
            <person name="DeBoy R.T."/>
            <person name="Kolonay J.F."/>
            <person name="Rasko D.A."/>
            <person name="Angiuoli S.V."/>
            <person name="Gill S.R."/>
            <person name="Paulsen I.T."/>
            <person name="Peterson J.D."/>
            <person name="White O."/>
            <person name="Nelson W.C."/>
            <person name="Nierman W.C."/>
            <person name="Beanan M.J."/>
            <person name="Brinkac L.M."/>
            <person name="Daugherty S.C."/>
            <person name="Dodson R.J."/>
            <person name="Durkin A.S."/>
            <person name="Madupu R."/>
            <person name="Haft D.H."/>
            <person name="Selengut J."/>
            <person name="Van Aken S.E."/>
            <person name="Khouri H.M."/>
            <person name="Fedorova N."/>
            <person name="Forberger H.A."/>
            <person name="Tran B."/>
            <person name="Kathariou S."/>
            <person name="Wonderling L.D."/>
            <person name="Uhlich G.A."/>
            <person name="Bayles D.O."/>
            <person name="Luchansky J.B."/>
            <person name="Fraser C.M."/>
        </authorList>
    </citation>
    <scope>NUCLEOTIDE SEQUENCE [LARGE SCALE GENOMIC DNA]</scope>
    <source>
        <strain>F2365</strain>
    </source>
</reference>
<feature type="chain" id="PRO_0000170406" description="Nucleoid-associated protein LMOf2365_2683">
    <location>
        <begin position="1"/>
        <end position="105"/>
    </location>
</feature>
<feature type="region of interest" description="Disordered" evidence="2">
    <location>
        <begin position="1"/>
        <end position="23"/>
    </location>
</feature>
<feature type="compositionally biased region" description="Low complexity" evidence="2">
    <location>
        <begin position="1"/>
        <end position="16"/>
    </location>
</feature>
<organism>
    <name type="scientific">Listeria monocytogenes serotype 4b (strain F2365)</name>
    <dbReference type="NCBI Taxonomy" id="265669"/>
    <lineage>
        <taxon>Bacteria</taxon>
        <taxon>Bacillati</taxon>
        <taxon>Bacillota</taxon>
        <taxon>Bacilli</taxon>
        <taxon>Bacillales</taxon>
        <taxon>Listeriaceae</taxon>
        <taxon>Listeria</taxon>
    </lineage>
</organism>
<evidence type="ECO:0000255" key="1">
    <source>
        <dbReference type="HAMAP-Rule" id="MF_00274"/>
    </source>
</evidence>
<evidence type="ECO:0000256" key="2">
    <source>
        <dbReference type="SAM" id="MobiDB-lite"/>
    </source>
</evidence>
<dbReference type="EMBL" id="AE017262">
    <property type="protein sequence ID" value="AAT05448.1"/>
    <property type="molecule type" value="Genomic_DNA"/>
</dbReference>
<dbReference type="RefSeq" id="WP_003722063.1">
    <property type="nucleotide sequence ID" value="NC_002973.6"/>
</dbReference>
<dbReference type="SMR" id="Q71W68"/>
<dbReference type="KEGG" id="lmf:LMOf2365_2683"/>
<dbReference type="HOGENOM" id="CLU_140930_1_0_9"/>
<dbReference type="GO" id="GO:0043590">
    <property type="term" value="C:bacterial nucleoid"/>
    <property type="evidence" value="ECO:0007669"/>
    <property type="project" value="UniProtKB-UniRule"/>
</dbReference>
<dbReference type="GO" id="GO:0005829">
    <property type="term" value="C:cytosol"/>
    <property type="evidence" value="ECO:0007669"/>
    <property type="project" value="TreeGrafter"/>
</dbReference>
<dbReference type="GO" id="GO:0003677">
    <property type="term" value="F:DNA binding"/>
    <property type="evidence" value="ECO:0007669"/>
    <property type="project" value="UniProtKB-UniRule"/>
</dbReference>
<dbReference type="FunFam" id="3.30.1310.10:FF:000002">
    <property type="entry name" value="Nucleoid-associated protein IKC_06587"/>
    <property type="match status" value="1"/>
</dbReference>
<dbReference type="Gene3D" id="3.30.1310.10">
    <property type="entry name" value="Nucleoid-associated protein YbaB-like domain"/>
    <property type="match status" value="1"/>
</dbReference>
<dbReference type="HAMAP" id="MF_00274">
    <property type="entry name" value="DNA_YbaB_EbfC"/>
    <property type="match status" value="1"/>
</dbReference>
<dbReference type="InterPro" id="IPR036894">
    <property type="entry name" value="YbaB-like_sf"/>
</dbReference>
<dbReference type="InterPro" id="IPR004401">
    <property type="entry name" value="YbaB/EbfC"/>
</dbReference>
<dbReference type="NCBIfam" id="TIGR00103">
    <property type="entry name" value="DNA_YbaB_EbfC"/>
    <property type="match status" value="1"/>
</dbReference>
<dbReference type="PANTHER" id="PTHR33449">
    <property type="entry name" value="NUCLEOID-ASSOCIATED PROTEIN YBAB"/>
    <property type="match status" value="1"/>
</dbReference>
<dbReference type="PANTHER" id="PTHR33449:SF1">
    <property type="entry name" value="NUCLEOID-ASSOCIATED PROTEIN YBAB"/>
    <property type="match status" value="1"/>
</dbReference>
<dbReference type="Pfam" id="PF02575">
    <property type="entry name" value="YbaB_DNA_bd"/>
    <property type="match status" value="1"/>
</dbReference>
<dbReference type="PIRSF" id="PIRSF004555">
    <property type="entry name" value="UCP004555"/>
    <property type="match status" value="1"/>
</dbReference>
<dbReference type="SUPFAM" id="SSF82607">
    <property type="entry name" value="YbaB-like"/>
    <property type="match status" value="1"/>
</dbReference>
<keyword id="KW-0963">Cytoplasm</keyword>
<keyword id="KW-0238">DNA-binding</keyword>
<accession>Q71W68</accession>
<name>Y2683_LISMF</name>
<comment type="function">
    <text evidence="1">Binds to DNA and alters its conformation. May be involved in regulation of gene expression, nucleoid organization and DNA protection.</text>
</comment>
<comment type="subunit">
    <text evidence="1">Homodimer.</text>
</comment>
<comment type="subcellular location">
    <subcellularLocation>
        <location evidence="1">Cytoplasm</location>
        <location evidence="1">Nucleoid</location>
    </subcellularLocation>
</comment>
<comment type="similarity">
    <text evidence="1">Belongs to the YbaB/EbfC family.</text>
</comment>
<protein>
    <recommendedName>
        <fullName evidence="1">Nucleoid-associated protein LMOf2365_2683</fullName>
    </recommendedName>
</protein>
<proteinExistence type="inferred from homology"/>
<gene>
    <name type="ordered locus">LMOf2365_2683</name>
</gene>